<protein>
    <recommendedName>
        <fullName evidence="3">Large ribosomal subunit protein eL13</fullName>
    </recommendedName>
    <alternativeName>
        <fullName>60S ribosomal protein L13</fullName>
    </alternativeName>
    <alternativeName>
        <fullName>A52</fullName>
    </alternativeName>
</protein>
<keyword id="KW-0002">3D-structure</keyword>
<keyword id="KW-0007">Acetylation</keyword>
<keyword id="KW-0963">Cytoplasm</keyword>
<keyword id="KW-1017">Isopeptide bond</keyword>
<keyword id="KW-0597">Phosphoprotein</keyword>
<keyword id="KW-1185">Reference proteome</keyword>
<keyword id="KW-0687">Ribonucleoprotein</keyword>
<keyword id="KW-0689">Ribosomal protein</keyword>
<keyword id="KW-0832">Ubl conjugation</keyword>
<gene>
    <name type="primary">Rpl13</name>
</gene>
<reference key="1">
    <citation type="submission" date="1995-06" db="EMBL/GenBank/DDBJ databases">
        <authorList>
            <person name="Palacios R."/>
            <person name="Xie X."/>
        </authorList>
    </citation>
    <scope>NUCLEOTIDE SEQUENCE [MRNA]</scope>
    <source>
        <strain>CBA/J</strain>
    </source>
</reference>
<reference key="2">
    <citation type="journal article" date="2005" name="Science">
        <title>The transcriptional landscape of the mammalian genome.</title>
        <authorList>
            <person name="Carninci P."/>
            <person name="Kasukawa T."/>
            <person name="Katayama S."/>
            <person name="Gough J."/>
            <person name="Frith M.C."/>
            <person name="Maeda N."/>
            <person name="Oyama R."/>
            <person name="Ravasi T."/>
            <person name="Lenhard B."/>
            <person name="Wells C."/>
            <person name="Kodzius R."/>
            <person name="Shimokawa K."/>
            <person name="Bajic V.B."/>
            <person name="Brenner S.E."/>
            <person name="Batalov S."/>
            <person name="Forrest A.R."/>
            <person name="Zavolan M."/>
            <person name="Davis M.J."/>
            <person name="Wilming L.G."/>
            <person name="Aidinis V."/>
            <person name="Allen J.E."/>
            <person name="Ambesi-Impiombato A."/>
            <person name="Apweiler R."/>
            <person name="Aturaliya R.N."/>
            <person name="Bailey T.L."/>
            <person name="Bansal M."/>
            <person name="Baxter L."/>
            <person name="Beisel K.W."/>
            <person name="Bersano T."/>
            <person name="Bono H."/>
            <person name="Chalk A.M."/>
            <person name="Chiu K.P."/>
            <person name="Choudhary V."/>
            <person name="Christoffels A."/>
            <person name="Clutterbuck D.R."/>
            <person name="Crowe M.L."/>
            <person name="Dalla E."/>
            <person name="Dalrymple B.P."/>
            <person name="de Bono B."/>
            <person name="Della Gatta G."/>
            <person name="di Bernardo D."/>
            <person name="Down T."/>
            <person name="Engstrom P."/>
            <person name="Fagiolini M."/>
            <person name="Faulkner G."/>
            <person name="Fletcher C.F."/>
            <person name="Fukushima T."/>
            <person name="Furuno M."/>
            <person name="Futaki S."/>
            <person name="Gariboldi M."/>
            <person name="Georgii-Hemming P."/>
            <person name="Gingeras T.R."/>
            <person name="Gojobori T."/>
            <person name="Green R.E."/>
            <person name="Gustincich S."/>
            <person name="Harbers M."/>
            <person name="Hayashi Y."/>
            <person name="Hensch T.K."/>
            <person name="Hirokawa N."/>
            <person name="Hill D."/>
            <person name="Huminiecki L."/>
            <person name="Iacono M."/>
            <person name="Ikeo K."/>
            <person name="Iwama A."/>
            <person name="Ishikawa T."/>
            <person name="Jakt M."/>
            <person name="Kanapin A."/>
            <person name="Katoh M."/>
            <person name="Kawasawa Y."/>
            <person name="Kelso J."/>
            <person name="Kitamura H."/>
            <person name="Kitano H."/>
            <person name="Kollias G."/>
            <person name="Krishnan S.P."/>
            <person name="Kruger A."/>
            <person name="Kummerfeld S.K."/>
            <person name="Kurochkin I.V."/>
            <person name="Lareau L.F."/>
            <person name="Lazarevic D."/>
            <person name="Lipovich L."/>
            <person name="Liu J."/>
            <person name="Liuni S."/>
            <person name="McWilliam S."/>
            <person name="Madan Babu M."/>
            <person name="Madera M."/>
            <person name="Marchionni L."/>
            <person name="Matsuda H."/>
            <person name="Matsuzawa S."/>
            <person name="Miki H."/>
            <person name="Mignone F."/>
            <person name="Miyake S."/>
            <person name="Morris K."/>
            <person name="Mottagui-Tabar S."/>
            <person name="Mulder N."/>
            <person name="Nakano N."/>
            <person name="Nakauchi H."/>
            <person name="Ng P."/>
            <person name="Nilsson R."/>
            <person name="Nishiguchi S."/>
            <person name="Nishikawa S."/>
            <person name="Nori F."/>
            <person name="Ohara O."/>
            <person name="Okazaki Y."/>
            <person name="Orlando V."/>
            <person name="Pang K.C."/>
            <person name="Pavan W.J."/>
            <person name="Pavesi G."/>
            <person name="Pesole G."/>
            <person name="Petrovsky N."/>
            <person name="Piazza S."/>
            <person name="Reed J."/>
            <person name="Reid J.F."/>
            <person name="Ring B.Z."/>
            <person name="Ringwald M."/>
            <person name="Rost B."/>
            <person name="Ruan Y."/>
            <person name="Salzberg S.L."/>
            <person name="Sandelin A."/>
            <person name="Schneider C."/>
            <person name="Schoenbach C."/>
            <person name="Sekiguchi K."/>
            <person name="Semple C.A."/>
            <person name="Seno S."/>
            <person name="Sessa L."/>
            <person name="Sheng Y."/>
            <person name="Shibata Y."/>
            <person name="Shimada H."/>
            <person name="Shimada K."/>
            <person name="Silva D."/>
            <person name="Sinclair B."/>
            <person name="Sperling S."/>
            <person name="Stupka E."/>
            <person name="Sugiura K."/>
            <person name="Sultana R."/>
            <person name="Takenaka Y."/>
            <person name="Taki K."/>
            <person name="Tammoja K."/>
            <person name="Tan S.L."/>
            <person name="Tang S."/>
            <person name="Taylor M.S."/>
            <person name="Tegner J."/>
            <person name="Teichmann S.A."/>
            <person name="Ueda H.R."/>
            <person name="van Nimwegen E."/>
            <person name="Verardo R."/>
            <person name="Wei C.L."/>
            <person name="Yagi K."/>
            <person name="Yamanishi H."/>
            <person name="Zabarovsky E."/>
            <person name="Zhu S."/>
            <person name="Zimmer A."/>
            <person name="Hide W."/>
            <person name="Bult C."/>
            <person name="Grimmond S.M."/>
            <person name="Teasdale R.D."/>
            <person name="Liu E.T."/>
            <person name="Brusic V."/>
            <person name="Quackenbush J."/>
            <person name="Wahlestedt C."/>
            <person name="Mattick J.S."/>
            <person name="Hume D.A."/>
            <person name="Kai C."/>
            <person name="Sasaki D."/>
            <person name="Tomaru Y."/>
            <person name="Fukuda S."/>
            <person name="Kanamori-Katayama M."/>
            <person name="Suzuki M."/>
            <person name="Aoki J."/>
            <person name="Arakawa T."/>
            <person name="Iida J."/>
            <person name="Imamura K."/>
            <person name="Itoh M."/>
            <person name="Kato T."/>
            <person name="Kawaji H."/>
            <person name="Kawagashira N."/>
            <person name="Kawashima T."/>
            <person name="Kojima M."/>
            <person name="Kondo S."/>
            <person name="Konno H."/>
            <person name="Nakano K."/>
            <person name="Ninomiya N."/>
            <person name="Nishio T."/>
            <person name="Okada M."/>
            <person name="Plessy C."/>
            <person name="Shibata K."/>
            <person name="Shiraki T."/>
            <person name="Suzuki S."/>
            <person name="Tagami M."/>
            <person name="Waki K."/>
            <person name="Watahiki A."/>
            <person name="Okamura-Oho Y."/>
            <person name="Suzuki H."/>
            <person name="Kawai J."/>
            <person name="Hayashizaki Y."/>
        </authorList>
    </citation>
    <scope>NUCLEOTIDE SEQUENCE [LARGE SCALE MRNA]</scope>
    <source>
        <strain>C57BL/6J</strain>
        <tissue>Embryonic liver</tissue>
        <tissue>Kidney</tissue>
    </source>
</reference>
<reference key="3">
    <citation type="journal article" date="2004" name="Genome Res.">
        <title>The status, quality, and expansion of the NIH full-length cDNA project: the Mammalian Gene Collection (MGC).</title>
        <authorList>
            <consortium name="The MGC Project Team"/>
        </authorList>
    </citation>
    <scope>NUCLEOTIDE SEQUENCE [LARGE SCALE MRNA]</scope>
    <source>
        <strain>FVB/N</strain>
        <tissue>Mammary gland</tissue>
    </source>
</reference>
<reference key="4">
    <citation type="journal article" date="2010" name="Cell">
        <title>A tissue-specific atlas of mouse protein phosphorylation and expression.</title>
        <authorList>
            <person name="Huttlin E.L."/>
            <person name="Jedrychowski M.P."/>
            <person name="Elias J.E."/>
            <person name="Goswami T."/>
            <person name="Rad R."/>
            <person name="Beausoleil S.A."/>
            <person name="Villen J."/>
            <person name="Haas W."/>
            <person name="Sowa M.E."/>
            <person name="Gygi S.P."/>
        </authorList>
    </citation>
    <scope>PHOSPHORYLATION [LARGE SCALE ANALYSIS] AT SER-106</scope>
    <scope>IDENTIFICATION BY MASS SPECTROMETRY [LARGE SCALE ANALYSIS]</scope>
    <source>
        <tissue>Brain</tissue>
        <tissue>Brown adipose tissue</tissue>
        <tissue>Heart</tissue>
        <tissue>Kidney</tissue>
        <tissue>Liver</tissue>
        <tissue>Lung</tissue>
        <tissue>Pancreas</tissue>
        <tissue>Spleen</tissue>
        <tissue>Testis</tissue>
    </source>
</reference>
<reference evidence="4 5" key="5">
    <citation type="journal article" date="2022" name="Nature">
        <title>A male germ-cell-specific ribosome controls male fertility.</title>
        <authorList>
            <person name="Li H."/>
            <person name="Huo Y."/>
            <person name="He X."/>
            <person name="Yao L."/>
            <person name="Zhang H."/>
            <person name="Cui Y."/>
            <person name="Xiao H."/>
            <person name="Xie W."/>
            <person name="Zhang D."/>
            <person name="Wang Y."/>
            <person name="Zhang S."/>
            <person name="Tu H."/>
            <person name="Cheng Y."/>
            <person name="Guo Y."/>
            <person name="Cao X."/>
            <person name="Zhu Y."/>
            <person name="Jiang T."/>
            <person name="Guo X."/>
            <person name="Qin Y."/>
            <person name="Sha J."/>
        </authorList>
    </citation>
    <scope>STRUCTURE BY ELECTRON MICROSCOPY (3.03 ANGSTROMS) OF RIBOSOME</scope>
    <scope>FUNCTION</scope>
    <scope>SUBUNIT</scope>
    <scope>SUBCELLULAR LOCATION</scope>
</reference>
<evidence type="ECO:0000250" key="1">
    <source>
        <dbReference type="UniProtKB" id="P26373"/>
    </source>
</evidence>
<evidence type="ECO:0000269" key="2">
    <source>
    </source>
</evidence>
<evidence type="ECO:0000305" key="3"/>
<evidence type="ECO:0007744" key="4">
    <source>
        <dbReference type="PDB" id="7CPU"/>
    </source>
</evidence>
<evidence type="ECO:0007744" key="5">
    <source>
        <dbReference type="PDB" id="7CPV"/>
    </source>
</evidence>
<evidence type="ECO:0007744" key="6">
    <source>
    </source>
</evidence>
<feature type="chain" id="PRO_0000192920" description="Large ribosomal subunit protein eL13">
    <location>
        <begin position="1"/>
        <end position="211"/>
    </location>
</feature>
<feature type="modified residue" description="N6-acetyllysine" evidence="1">
    <location>
        <position position="16"/>
    </location>
</feature>
<feature type="modified residue" description="Phosphoserine" evidence="1">
    <location>
        <position position="52"/>
    </location>
</feature>
<feature type="modified residue" description="Phosphoserine" evidence="1">
    <location>
        <position position="77"/>
    </location>
</feature>
<feature type="modified residue" description="Phosphoserine" evidence="6">
    <location>
        <position position="106"/>
    </location>
</feature>
<feature type="modified residue" description="N6-acetyllysine; alternate" evidence="1">
    <location>
        <position position="177"/>
    </location>
</feature>
<feature type="cross-link" description="Glycyl lysine isopeptide (Lys-Gly) (interchain with G-Cter in SUMO2)" evidence="1">
    <location>
        <position position="123"/>
    </location>
</feature>
<feature type="cross-link" description="Glycyl lysine isopeptide (Lys-Gly) (interchain with G-Cter in SUMO2)" evidence="1">
    <location>
        <position position="145"/>
    </location>
</feature>
<feature type="cross-link" description="Glycyl lysine isopeptide (Lys-Gly) (interchain with G-Cter in SUMO1); alternate" evidence="1">
    <location>
        <position position="174"/>
    </location>
</feature>
<feature type="cross-link" description="Glycyl lysine isopeptide (Lys-Gly) (interchain with G-Cter in SUMO2); alternate" evidence="1">
    <location>
        <position position="174"/>
    </location>
</feature>
<feature type="cross-link" description="Glycyl lysine isopeptide (Lys-Gly) (interchain with G-Cter in SUMO2); alternate" evidence="1">
    <location>
        <position position="177"/>
    </location>
</feature>
<feature type="sequence conflict" description="In Ref. 1; AAA69923." evidence="3" ref="1">
    <original>Q</original>
    <variation>L</variation>
    <location>
        <position position="40"/>
    </location>
</feature>
<feature type="sequence conflict" description="In Ref. 1; AAA69923." evidence="3" ref="1">
    <original>RLFGIRA</original>
    <variation>PTLWQSEQ</variation>
    <location>
        <begin position="190"/>
        <end position="196"/>
    </location>
</feature>
<feature type="sequence conflict" description="In Ref. 1; AAA69923." evidence="3" ref="1">
    <original>AEQDVEKKK</original>
    <variation>SEQRCWKRKN</variation>
    <location>
        <begin position="203"/>
        <end position="211"/>
    </location>
</feature>
<sequence>MAPSRNGMILKPHFHKDWQQRVDTWFNQPARKIRRRKARQAKARRIAPRPASGPIRPIVRCPTVRYHTKVRAGRGFSLEELRVAGIHKKVARTIGISVDPRRRNKSTESLQANVQRLKEYRSKLILFPRKPSAPKKGDSSAEELKLATQLTGPVMPIRNVYKKEKARVITEEEKNFKAFASLRMARANARLFGIRAKRAKEAAEQDVEKKK</sequence>
<accession>P47963</accession>
<accession>Q9CRZ9</accession>
<accession>Q9DCH1</accession>
<dbReference type="EMBL" id="U28917">
    <property type="protein sequence ID" value="AAA69923.1"/>
    <property type="molecule type" value="mRNA"/>
</dbReference>
<dbReference type="EMBL" id="AK002787">
    <property type="protein sequence ID" value="BAB22358.1"/>
    <property type="molecule type" value="mRNA"/>
</dbReference>
<dbReference type="EMBL" id="AK010989">
    <property type="protein sequence ID" value="BAB27309.1"/>
    <property type="molecule type" value="mRNA"/>
</dbReference>
<dbReference type="EMBL" id="BC055358">
    <property type="protein sequence ID" value="AAH55358.1"/>
    <property type="molecule type" value="mRNA"/>
</dbReference>
<dbReference type="CCDS" id="CCDS22747.1"/>
<dbReference type="RefSeq" id="NP_058018.2">
    <property type="nucleotide sequence ID" value="NM_016738.5"/>
</dbReference>
<dbReference type="PDB" id="6SWA">
    <property type="method" value="EM"/>
    <property type="resolution" value="3.10 A"/>
    <property type="chains" value="K=1-211"/>
</dbReference>
<dbReference type="PDB" id="7CPU">
    <property type="method" value="EM"/>
    <property type="resolution" value="2.82 A"/>
    <property type="chains" value="LL=1-211"/>
</dbReference>
<dbReference type="PDB" id="7CPV">
    <property type="method" value="EM"/>
    <property type="resolution" value="3.03 A"/>
    <property type="chains" value="LL=1-211"/>
</dbReference>
<dbReference type="PDB" id="7LS1">
    <property type="method" value="EM"/>
    <property type="resolution" value="3.30 A"/>
    <property type="chains" value="F1=1-211"/>
</dbReference>
<dbReference type="PDB" id="7LS2">
    <property type="method" value="EM"/>
    <property type="resolution" value="3.10 A"/>
    <property type="chains" value="F1=1-211"/>
</dbReference>
<dbReference type="PDBsum" id="6SWA"/>
<dbReference type="PDBsum" id="7CPU"/>
<dbReference type="PDBsum" id="7CPV"/>
<dbReference type="PDBsum" id="7LS1"/>
<dbReference type="PDBsum" id="7LS2"/>
<dbReference type="EMDB" id="EMD-10321"/>
<dbReference type="EMDB" id="EMD-23500"/>
<dbReference type="EMDB" id="EMD-23501"/>
<dbReference type="EMDB" id="EMD-30432"/>
<dbReference type="EMDB" id="EMD-30433"/>
<dbReference type="SMR" id="P47963"/>
<dbReference type="BioGRID" id="234761">
    <property type="interactions" value="112"/>
</dbReference>
<dbReference type="ComplexPortal" id="CPX-5262">
    <property type="entry name" value="60S cytosolic large ribosomal subunit"/>
</dbReference>
<dbReference type="ComplexPortal" id="CPX-7662">
    <property type="entry name" value="60S cytosolic large ribosomal subunit, testis-specific variant"/>
</dbReference>
<dbReference type="ComplexPortal" id="CPX-7663">
    <property type="entry name" value="60S cytosolic large ribosomal subunit, striated muscle variant"/>
</dbReference>
<dbReference type="CORUM" id="P47963"/>
<dbReference type="FunCoup" id="P47963">
    <property type="interactions" value="2831"/>
</dbReference>
<dbReference type="IntAct" id="P47963">
    <property type="interactions" value="6"/>
</dbReference>
<dbReference type="MINT" id="P47963"/>
<dbReference type="STRING" id="10090.ENSMUSP00000000756"/>
<dbReference type="GlyGen" id="P47963">
    <property type="glycosylation" value="1 site, 1 O-linked glycan (1 site)"/>
</dbReference>
<dbReference type="iPTMnet" id="P47963"/>
<dbReference type="MetOSite" id="P47963"/>
<dbReference type="PhosphoSitePlus" id="P47963"/>
<dbReference type="SwissPalm" id="P47963"/>
<dbReference type="jPOST" id="P47963"/>
<dbReference type="PaxDb" id="10090-ENSMUSP00000000756"/>
<dbReference type="PeptideAtlas" id="P47963"/>
<dbReference type="ProteomicsDB" id="253327"/>
<dbReference type="Pumba" id="P47963"/>
<dbReference type="Antibodypedia" id="17428">
    <property type="antibodies" value="150 antibodies from 27 providers"/>
</dbReference>
<dbReference type="DNASU" id="270106"/>
<dbReference type="Ensembl" id="ENSMUST00000000756.6">
    <property type="protein sequence ID" value="ENSMUSP00000000756.6"/>
    <property type="gene ID" value="ENSMUSG00000000740.13"/>
</dbReference>
<dbReference type="GeneID" id="270106"/>
<dbReference type="KEGG" id="mmu:270106"/>
<dbReference type="UCSC" id="uc009nue.2">
    <property type="organism name" value="mouse"/>
</dbReference>
<dbReference type="AGR" id="MGI:105922"/>
<dbReference type="CTD" id="6137"/>
<dbReference type="MGI" id="MGI:105922">
    <property type="gene designation" value="Rpl13"/>
</dbReference>
<dbReference type="VEuPathDB" id="HostDB:ENSMUSG00000000740"/>
<dbReference type="eggNOG" id="KOG3295">
    <property type="taxonomic scope" value="Eukaryota"/>
</dbReference>
<dbReference type="GeneTree" id="ENSGT00390000007818"/>
<dbReference type="HOGENOM" id="CLU_075696_1_0_1"/>
<dbReference type="InParanoid" id="P47963"/>
<dbReference type="OMA" id="IQKNHFR"/>
<dbReference type="OrthoDB" id="10264538at2759"/>
<dbReference type="PhylomeDB" id="P47963"/>
<dbReference type="TreeFam" id="TF300073"/>
<dbReference type="Reactome" id="R-MMU-156827">
    <property type="pathway name" value="L13a-mediated translational silencing of Ceruloplasmin expression"/>
</dbReference>
<dbReference type="Reactome" id="R-MMU-1799339">
    <property type="pathway name" value="SRP-dependent cotranslational protein targeting to membrane"/>
</dbReference>
<dbReference type="Reactome" id="R-MMU-6791226">
    <property type="pathway name" value="Major pathway of rRNA processing in the nucleolus and cytosol"/>
</dbReference>
<dbReference type="Reactome" id="R-MMU-72689">
    <property type="pathway name" value="Formation of a pool of free 40S subunits"/>
</dbReference>
<dbReference type="Reactome" id="R-MMU-72706">
    <property type="pathway name" value="GTP hydrolysis and joining of the 60S ribosomal subunit"/>
</dbReference>
<dbReference type="Reactome" id="R-MMU-975956">
    <property type="pathway name" value="Nonsense Mediated Decay (NMD) independent of the Exon Junction Complex (EJC)"/>
</dbReference>
<dbReference type="Reactome" id="R-MMU-975957">
    <property type="pathway name" value="Nonsense Mediated Decay (NMD) enhanced by the Exon Junction Complex (EJC)"/>
</dbReference>
<dbReference type="BioGRID-ORCS" id="270106">
    <property type="hits" value="27 hits in 76 CRISPR screens"/>
</dbReference>
<dbReference type="CD-CODE" id="CE726F99">
    <property type="entry name" value="Postsynaptic density"/>
</dbReference>
<dbReference type="ChiTaRS" id="Rpl13">
    <property type="organism name" value="mouse"/>
</dbReference>
<dbReference type="PRO" id="PR:P47963"/>
<dbReference type="Proteomes" id="UP000000589">
    <property type="component" value="Chromosome 8"/>
</dbReference>
<dbReference type="RNAct" id="P47963">
    <property type="molecule type" value="protein"/>
</dbReference>
<dbReference type="Bgee" id="ENSMUSG00000000740">
    <property type="expression patterns" value="Expressed in embryonic facial prominence and 70 other cell types or tissues"/>
</dbReference>
<dbReference type="GO" id="GO:0005737">
    <property type="term" value="C:cytoplasm"/>
    <property type="evidence" value="ECO:0000314"/>
    <property type="project" value="ComplexPortal"/>
</dbReference>
<dbReference type="GO" id="GO:0005829">
    <property type="term" value="C:cytosol"/>
    <property type="evidence" value="ECO:0000250"/>
    <property type="project" value="UniProtKB"/>
</dbReference>
<dbReference type="GO" id="GO:0022625">
    <property type="term" value="C:cytosolic large ribosomal subunit"/>
    <property type="evidence" value="ECO:0000314"/>
    <property type="project" value="UniProtKB"/>
</dbReference>
<dbReference type="GO" id="GO:0005783">
    <property type="term" value="C:endoplasmic reticulum"/>
    <property type="evidence" value="ECO:0007669"/>
    <property type="project" value="Ensembl"/>
</dbReference>
<dbReference type="GO" id="GO:0005730">
    <property type="term" value="C:nucleolus"/>
    <property type="evidence" value="ECO:0007669"/>
    <property type="project" value="Ensembl"/>
</dbReference>
<dbReference type="GO" id="GO:0098794">
    <property type="term" value="C:postsynapse"/>
    <property type="evidence" value="ECO:0000303"/>
    <property type="project" value="SynGO"/>
</dbReference>
<dbReference type="GO" id="GO:0098793">
    <property type="term" value="C:presynapse"/>
    <property type="evidence" value="ECO:0000303"/>
    <property type="project" value="SynGO"/>
</dbReference>
<dbReference type="GO" id="GO:0005840">
    <property type="term" value="C:ribosome"/>
    <property type="evidence" value="ECO:0000303"/>
    <property type="project" value="SynGO"/>
</dbReference>
<dbReference type="GO" id="GO:0045202">
    <property type="term" value="C:synapse"/>
    <property type="evidence" value="ECO:0000314"/>
    <property type="project" value="SynGO"/>
</dbReference>
<dbReference type="GO" id="GO:0003735">
    <property type="term" value="F:structural constituent of ribosome"/>
    <property type="evidence" value="ECO:0000314"/>
    <property type="project" value="UniProtKB"/>
</dbReference>
<dbReference type="GO" id="GO:0001824">
    <property type="term" value="P:blastocyst development"/>
    <property type="evidence" value="ECO:0000315"/>
    <property type="project" value="MGI"/>
</dbReference>
<dbReference type="GO" id="GO:0060348">
    <property type="term" value="P:bone development"/>
    <property type="evidence" value="ECO:0007669"/>
    <property type="project" value="Ensembl"/>
</dbReference>
<dbReference type="GO" id="GO:0002181">
    <property type="term" value="P:cytoplasmic translation"/>
    <property type="evidence" value="ECO:0000303"/>
    <property type="project" value="ComplexPortal"/>
</dbReference>
<dbReference type="GO" id="GO:0140242">
    <property type="term" value="P:translation at postsynapse"/>
    <property type="evidence" value="ECO:0000303"/>
    <property type="project" value="SynGO"/>
</dbReference>
<dbReference type="GO" id="GO:0140236">
    <property type="term" value="P:translation at presynapse"/>
    <property type="evidence" value="ECO:0000303"/>
    <property type="project" value="SynGO"/>
</dbReference>
<dbReference type="FunFam" id="1.20.5.110:FF:000003">
    <property type="entry name" value="60S ribosomal protein L13"/>
    <property type="match status" value="1"/>
</dbReference>
<dbReference type="Gene3D" id="1.20.5.110">
    <property type="match status" value="1"/>
</dbReference>
<dbReference type="HAMAP" id="MF_00499">
    <property type="entry name" value="Ribosomal_eL13"/>
    <property type="match status" value="1"/>
</dbReference>
<dbReference type="InterPro" id="IPR001380">
    <property type="entry name" value="Ribosomal_eL13"/>
</dbReference>
<dbReference type="InterPro" id="IPR018256">
    <property type="entry name" value="Ribosomal_eL13_CS"/>
</dbReference>
<dbReference type="PANTHER" id="PTHR11722">
    <property type="entry name" value="60S RIBOSOMAL PROTEIN L13"/>
    <property type="match status" value="1"/>
</dbReference>
<dbReference type="PANTHER" id="PTHR11722:SF0">
    <property type="entry name" value="LARGE RIBOSOMAL SUBUNIT PROTEIN EL13"/>
    <property type="match status" value="1"/>
</dbReference>
<dbReference type="Pfam" id="PF01294">
    <property type="entry name" value="Ribosomal_L13e"/>
    <property type="match status" value="1"/>
</dbReference>
<dbReference type="PROSITE" id="PS01104">
    <property type="entry name" value="RIBOSOMAL_L13E"/>
    <property type="match status" value="1"/>
</dbReference>
<organism>
    <name type="scientific">Mus musculus</name>
    <name type="common">Mouse</name>
    <dbReference type="NCBI Taxonomy" id="10090"/>
    <lineage>
        <taxon>Eukaryota</taxon>
        <taxon>Metazoa</taxon>
        <taxon>Chordata</taxon>
        <taxon>Craniata</taxon>
        <taxon>Vertebrata</taxon>
        <taxon>Euteleostomi</taxon>
        <taxon>Mammalia</taxon>
        <taxon>Eutheria</taxon>
        <taxon>Euarchontoglires</taxon>
        <taxon>Glires</taxon>
        <taxon>Rodentia</taxon>
        <taxon>Myomorpha</taxon>
        <taxon>Muroidea</taxon>
        <taxon>Muridae</taxon>
        <taxon>Murinae</taxon>
        <taxon>Mus</taxon>
        <taxon>Mus</taxon>
    </lineage>
</organism>
<comment type="function">
    <text evidence="2">Component of the large ribosomal subunit (PubMed:36517592). The ribosome is a large ribonucleoprotein complex responsible for the synthesis of proteins in the cell (PubMed:36517592).</text>
</comment>
<comment type="subunit">
    <text evidence="2">Component of the large ribosomal subunit.</text>
</comment>
<comment type="subcellular location">
    <subcellularLocation>
        <location evidence="2">Cytoplasm</location>
    </subcellularLocation>
</comment>
<comment type="similarity">
    <text evidence="3">Belongs to the eukaryotic ribosomal protein eL13 family.</text>
</comment>
<proteinExistence type="evidence at protein level"/>
<name>RL13_MOUSE</name>